<proteinExistence type="inferred from homology"/>
<protein>
    <recommendedName>
        <fullName evidence="1">NAD(P)H-quinone oxidoreductase subunit K, chloroplastic</fullName>
        <ecNumber evidence="1">7.1.1.-</ecNumber>
    </recommendedName>
    <alternativeName>
        <fullName evidence="1">NAD(P)H dehydrogenase subunit K</fullName>
    </alternativeName>
    <alternativeName>
        <fullName evidence="1">NADH-plastoquinone oxidoreductase subunit K</fullName>
    </alternativeName>
</protein>
<dbReference type="EC" id="7.1.1.-" evidence="1"/>
<dbReference type="EMBL" id="DQ864733">
    <property type="protein sequence ID" value="ABI49024.1"/>
    <property type="molecule type" value="Genomic_DNA"/>
</dbReference>
<dbReference type="RefSeq" id="YP_740479.1">
    <property type="nucleotide sequence ID" value="NC_008334.1"/>
</dbReference>
<dbReference type="SMR" id="Q09MH4"/>
<dbReference type="GeneID" id="4271140"/>
<dbReference type="KEGG" id="cit:4271140"/>
<dbReference type="OrthoDB" id="907793at71240"/>
<dbReference type="GO" id="GO:0009535">
    <property type="term" value="C:chloroplast thylakoid membrane"/>
    <property type="evidence" value="ECO:0007669"/>
    <property type="project" value="UniProtKB-SubCell"/>
</dbReference>
<dbReference type="GO" id="GO:0051539">
    <property type="term" value="F:4 iron, 4 sulfur cluster binding"/>
    <property type="evidence" value="ECO:0007669"/>
    <property type="project" value="UniProtKB-KW"/>
</dbReference>
<dbReference type="GO" id="GO:0005506">
    <property type="term" value="F:iron ion binding"/>
    <property type="evidence" value="ECO:0007669"/>
    <property type="project" value="UniProtKB-UniRule"/>
</dbReference>
<dbReference type="GO" id="GO:0008137">
    <property type="term" value="F:NADH dehydrogenase (ubiquinone) activity"/>
    <property type="evidence" value="ECO:0007669"/>
    <property type="project" value="InterPro"/>
</dbReference>
<dbReference type="GO" id="GO:0048038">
    <property type="term" value="F:quinone binding"/>
    <property type="evidence" value="ECO:0007669"/>
    <property type="project" value="UniProtKB-KW"/>
</dbReference>
<dbReference type="GO" id="GO:0019684">
    <property type="term" value="P:photosynthesis, light reaction"/>
    <property type="evidence" value="ECO:0007669"/>
    <property type="project" value="UniProtKB-UniRule"/>
</dbReference>
<dbReference type="FunFam" id="3.40.50.12280:FF:000003">
    <property type="entry name" value="NAD(P)H-quinone oxidoreductase subunit K, chloroplastic"/>
    <property type="match status" value="1"/>
</dbReference>
<dbReference type="Gene3D" id="3.40.50.12280">
    <property type="match status" value="1"/>
</dbReference>
<dbReference type="HAMAP" id="MF_01356">
    <property type="entry name" value="NDH1_NuoB"/>
    <property type="match status" value="1"/>
</dbReference>
<dbReference type="InterPro" id="IPR006137">
    <property type="entry name" value="NADH_UbQ_OxRdtase-like_20kDa"/>
</dbReference>
<dbReference type="InterPro" id="IPR006138">
    <property type="entry name" value="NADH_UQ_OxRdtase_20Kd_su"/>
</dbReference>
<dbReference type="NCBIfam" id="TIGR01957">
    <property type="entry name" value="nuoB_fam"/>
    <property type="match status" value="1"/>
</dbReference>
<dbReference type="NCBIfam" id="NF005012">
    <property type="entry name" value="PRK06411.1"/>
    <property type="match status" value="1"/>
</dbReference>
<dbReference type="PANTHER" id="PTHR11995">
    <property type="entry name" value="NADH DEHYDROGENASE"/>
    <property type="match status" value="1"/>
</dbReference>
<dbReference type="PANTHER" id="PTHR11995:SF14">
    <property type="entry name" value="NADH DEHYDROGENASE [UBIQUINONE] IRON-SULFUR PROTEIN 7, MITOCHONDRIAL"/>
    <property type="match status" value="1"/>
</dbReference>
<dbReference type="Pfam" id="PF01058">
    <property type="entry name" value="Oxidored_q6"/>
    <property type="match status" value="1"/>
</dbReference>
<dbReference type="SUPFAM" id="SSF56770">
    <property type="entry name" value="HydA/Nqo6-like"/>
    <property type="match status" value="1"/>
</dbReference>
<dbReference type="PROSITE" id="PS01150">
    <property type="entry name" value="COMPLEX1_20K"/>
    <property type="match status" value="1"/>
</dbReference>
<evidence type="ECO:0000255" key="1">
    <source>
        <dbReference type="HAMAP-Rule" id="MF_01356"/>
    </source>
</evidence>
<keyword id="KW-0004">4Fe-4S</keyword>
<keyword id="KW-0150">Chloroplast</keyword>
<keyword id="KW-0408">Iron</keyword>
<keyword id="KW-0411">Iron-sulfur</keyword>
<keyword id="KW-0472">Membrane</keyword>
<keyword id="KW-0479">Metal-binding</keyword>
<keyword id="KW-0520">NAD</keyword>
<keyword id="KW-0521">NADP</keyword>
<keyword id="KW-0934">Plastid</keyword>
<keyword id="KW-0618">Plastoquinone</keyword>
<keyword id="KW-0874">Quinone</keyword>
<keyword id="KW-0793">Thylakoid</keyword>
<keyword id="KW-1278">Translocase</keyword>
<keyword id="KW-0813">Transport</keyword>
<comment type="function">
    <text evidence="1">NDH shuttles electrons from NAD(P)H:plastoquinone, via FMN and iron-sulfur (Fe-S) centers, to quinones in the photosynthetic chain and possibly in a chloroplast respiratory chain. The immediate electron acceptor for the enzyme in this species is believed to be plastoquinone. Couples the redox reaction to proton translocation, and thus conserves the redox energy in a proton gradient.</text>
</comment>
<comment type="catalytic activity">
    <reaction evidence="1">
        <text>a plastoquinone + NADH + (n+1) H(+)(in) = a plastoquinol + NAD(+) + n H(+)(out)</text>
        <dbReference type="Rhea" id="RHEA:42608"/>
        <dbReference type="Rhea" id="RHEA-COMP:9561"/>
        <dbReference type="Rhea" id="RHEA-COMP:9562"/>
        <dbReference type="ChEBI" id="CHEBI:15378"/>
        <dbReference type="ChEBI" id="CHEBI:17757"/>
        <dbReference type="ChEBI" id="CHEBI:57540"/>
        <dbReference type="ChEBI" id="CHEBI:57945"/>
        <dbReference type="ChEBI" id="CHEBI:62192"/>
    </reaction>
</comment>
<comment type="catalytic activity">
    <reaction evidence="1">
        <text>a plastoquinone + NADPH + (n+1) H(+)(in) = a plastoquinol + NADP(+) + n H(+)(out)</text>
        <dbReference type="Rhea" id="RHEA:42612"/>
        <dbReference type="Rhea" id="RHEA-COMP:9561"/>
        <dbReference type="Rhea" id="RHEA-COMP:9562"/>
        <dbReference type="ChEBI" id="CHEBI:15378"/>
        <dbReference type="ChEBI" id="CHEBI:17757"/>
        <dbReference type="ChEBI" id="CHEBI:57783"/>
        <dbReference type="ChEBI" id="CHEBI:58349"/>
        <dbReference type="ChEBI" id="CHEBI:62192"/>
    </reaction>
</comment>
<comment type="cofactor">
    <cofactor evidence="1">
        <name>[4Fe-4S] cluster</name>
        <dbReference type="ChEBI" id="CHEBI:49883"/>
    </cofactor>
    <text evidence="1">Binds 1 [4Fe-4S] cluster.</text>
</comment>
<comment type="subunit">
    <text evidence="1">NDH is composed of at least 16 different subunits, 5 of which are encoded in the nucleus.</text>
</comment>
<comment type="subcellular location">
    <subcellularLocation>
        <location evidence="1">Plastid</location>
        <location evidence="1">Chloroplast thylakoid membrane</location>
        <topology evidence="1">Peripheral membrane protein</topology>
        <orientation evidence="1">Stromal side</orientation>
    </subcellularLocation>
</comment>
<comment type="similarity">
    <text evidence="1">Belongs to the complex I 20 kDa subunit family.</text>
</comment>
<sequence>MNSIEFSLLDRTTPNSFISTTSNDLSNWSRLSSLWPLLYGTSCCFIEFASLIGSRFDFDRYGLVPRSSPRQADLILTAGTVTMKMAPSLVRLYEQMPEPKYVIAMGACTITGGMFSTDSYSTVRGVDKLIPVDVYLPGCPPKPEAVIDAITKLRKKISREIYEDRIRLQRENRSFTFTTNHKFRVVCSTNTGNYDQGLLYQPPSTSEIPPETFFKYKSSVSSPEFIN</sequence>
<reference key="1">
    <citation type="journal article" date="2006" name="BMC Plant Biol.">
        <title>The complete chloroplast genome sequence of Citrus sinensis (L.) Osbeck var 'Ridge Pineapple': organization and phylogenetic relationships to other angiosperms.</title>
        <authorList>
            <person name="Bausher M.G."/>
            <person name="Singh N.D."/>
            <person name="Lee S.-B."/>
            <person name="Jansen R.K."/>
            <person name="Daniell H."/>
        </authorList>
    </citation>
    <scope>NUCLEOTIDE SEQUENCE [LARGE SCALE GENOMIC DNA]</scope>
    <source>
        <strain>cv. Osbeck var. Ridge Pineapple</strain>
    </source>
</reference>
<geneLocation type="chloroplast"/>
<accession>Q09MH4</accession>
<organism>
    <name type="scientific">Citrus sinensis</name>
    <name type="common">Sweet orange</name>
    <name type="synonym">Citrus aurantium var. sinensis</name>
    <dbReference type="NCBI Taxonomy" id="2711"/>
    <lineage>
        <taxon>Eukaryota</taxon>
        <taxon>Viridiplantae</taxon>
        <taxon>Streptophyta</taxon>
        <taxon>Embryophyta</taxon>
        <taxon>Tracheophyta</taxon>
        <taxon>Spermatophyta</taxon>
        <taxon>Magnoliopsida</taxon>
        <taxon>eudicotyledons</taxon>
        <taxon>Gunneridae</taxon>
        <taxon>Pentapetalae</taxon>
        <taxon>rosids</taxon>
        <taxon>malvids</taxon>
        <taxon>Sapindales</taxon>
        <taxon>Rutaceae</taxon>
        <taxon>Aurantioideae</taxon>
        <taxon>Citrus</taxon>
    </lineage>
</organism>
<name>NDHK_CITSI</name>
<feature type="chain" id="PRO_0000358533" description="NAD(P)H-quinone oxidoreductase subunit K, chloroplastic">
    <location>
        <begin position="1"/>
        <end position="227"/>
    </location>
</feature>
<feature type="binding site" evidence="1">
    <location>
        <position position="43"/>
    </location>
    <ligand>
        <name>[4Fe-4S] cluster</name>
        <dbReference type="ChEBI" id="CHEBI:49883"/>
    </ligand>
</feature>
<feature type="binding site" evidence="1">
    <location>
        <position position="44"/>
    </location>
    <ligand>
        <name>[4Fe-4S] cluster</name>
        <dbReference type="ChEBI" id="CHEBI:49883"/>
    </ligand>
</feature>
<feature type="binding site" evidence="1">
    <location>
        <position position="108"/>
    </location>
    <ligand>
        <name>[4Fe-4S] cluster</name>
        <dbReference type="ChEBI" id="CHEBI:49883"/>
    </ligand>
</feature>
<feature type="binding site" evidence="1">
    <location>
        <position position="139"/>
    </location>
    <ligand>
        <name>[4Fe-4S] cluster</name>
        <dbReference type="ChEBI" id="CHEBI:49883"/>
    </ligand>
</feature>
<gene>
    <name evidence="1" type="primary">ndhK</name>
</gene>